<proteinExistence type="inferred from homology"/>
<name>RNH2_THEVB</name>
<gene>
    <name evidence="1" type="primary">rnhB</name>
    <name type="ordered locus">tll0663</name>
</gene>
<feature type="chain" id="PRO_0000111640" description="Ribonuclease HII">
    <location>
        <begin position="1"/>
        <end position="214"/>
    </location>
</feature>
<feature type="domain" description="RNase H type-2" evidence="2">
    <location>
        <begin position="18"/>
        <end position="208"/>
    </location>
</feature>
<feature type="binding site" evidence="1">
    <location>
        <position position="24"/>
    </location>
    <ligand>
        <name>a divalent metal cation</name>
        <dbReference type="ChEBI" id="CHEBI:60240"/>
    </ligand>
</feature>
<feature type="binding site" evidence="1">
    <location>
        <position position="25"/>
    </location>
    <ligand>
        <name>a divalent metal cation</name>
        <dbReference type="ChEBI" id="CHEBI:60240"/>
    </ligand>
</feature>
<feature type="binding site" evidence="1">
    <location>
        <position position="116"/>
    </location>
    <ligand>
        <name>a divalent metal cation</name>
        <dbReference type="ChEBI" id="CHEBI:60240"/>
    </ligand>
</feature>
<evidence type="ECO:0000255" key="1">
    <source>
        <dbReference type="HAMAP-Rule" id="MF_00052"/>
    </source>
</evidence>
<evidence type="ECO:0000255" key="2">
    <source>
        <dbReference type="PROSITE-ProRule" id="PRU01319"/>
    </source>
</evidence>
<dbReference type="EC" id="3.1.26.4" evidence="1"/>
<dbReference type="EMBL" id="BA000039">
    <property type="protein sequence ID" value="BAC08214.1"/>
    <property type="molecule type" value="Genomic_DNA"/>
</dbReference>
<dbReference type="RefSeq" id="NP_681452.1">
    <property type="nucleotide sequence ID" value="NC_004113.1"/>
</dbReference>
<dbReference type="RefSeq" id="WP_011056510.1">
    <property type="nucleotide sequence ID" value="NC_004113.1"/>
</dbReference>
<dbReference type="SMR" id="Q8DL36"/>
<dbReference type="STRING" id="197221.gene:10747253"/>
<dbReference type="EnsemblBacteria" id="BAC08214">
    <property type="protein sequence ID" value="BAC08214"/>
    <property type="gene ID" value="BAC08214"/>
</dbReference>
<dbReference type="KEGG" id="tel:tll0663"/>
<dbReference type="PATRIC" id="fig|197221.4.peg.702"/>
<dbReference type="eggNOG" id="COG0164">
    <property type="taxonomic scope" value="Bacteria"/>
</dbReference>
<dbReference type="Proteomes" id="UP000000440">
    <property type="component" value="Chromosome"/>
</dbReference>
<dbReference type="GO" id="GO:0005737">
    <property type="term" value="C:cytoplasm"/>
    <property type="evidence" value="ECO:0007669"/>
    <property type="project" value="UniProtKB-SubCell"/>
</dbReference>
<dbReference type="GO" id="GO:0032299">
    <property type="term" value="C:ribonuclease H2 complex"/>
    <property type="evidence" value="ECO:0007669"/>
    <property type="project" value="TreeGrafter"/>
</dbReference>
<dbReference type="GO" id="GO:0030145">
    <property type="term" value="F:manganese ion binding"/>
    <property type="evidence" value="ECO:0007669"/>
    <property type="project" value="UniProtKB-UniRule"/>
</dbReference>
<dbReference type="GO" id="GO:0003723">
    <property type="term" value="F:RNA binding"/>
    <property type="evidence" value="ECO:0007669"/>
    <property type="project" value="InterPro"/>
</dbReference>
<dbReference type="GO" id="GO:0004523">
    <property type="term" value="F:RNA-DNA hybrid ribonuclease activity"/>
    <property type="evidence" value="ECO:0007669"/>
    <property type="project" value="UniProtKB-UniRule"/>
</dbReference>
<dbReference type="GO" id="GO:0043137">
    <property type="term" value="P:DNA replication, removal of RNA primer"/>
    <property type="evidence" value="ECO:0007669"/>
    <property type="project" value="TreeGrafter"/>
</dbReference>
<dbReference type="GO" id="GO:0006298">
    <property type="term" value="P:mismatch repair"/>
    <property type="evidence" value="ECO:0007669"/>
    <property type="project" value="TreeGrafter"/>
</dbReference>
<dbReference type="CDD" id="cd07182">
    <property type="entry name" value="RNase_HII_bacteria_HII_like"/>
    <property type="match status" value="1"/>
</dbReference>
<dbReference type="Gene3D" id="3.30.420.10">
    <property type="entry name" value="Ribonuclease H-like superfamily/Ribonuclease H"/>
    <property type="match status" value="1"/>
</dbReference>
<dbReference type="HAMAP" id="MF_00052_B">
    <property type="entry name" value="RNase_HII_B"/>
    <property type="match status" value="1"/>
</dbReference>
<dbReference type="InterPro" id="IPR022898">
    <property type="entry name" value="RNase_HII"/>
</dbReference>
<dbReference type="InterPro" id="IPR001352">
    <property type="entry name" value="RNase_HII/HIII"/>
</dbReference>
<dbReference type="InterPro" id="IPR024567">
    <property type="entry name" value="RNase_HII/HIII_dom"/>
</dbReference>
<dbReference type="InterPro" id="IPR012337">
    <property type="entry name" value="RNaseH-like_sf"/>
</dbReference>
<dbReference type="InterPro" id="IPR036397">
    <property type="entry name" value="RNaseH_sf"/>
</dbReference>
<dbReference type="NCBIfam" id="NF000595">
    <property type="entry name" value="PRK00015.1-3"/>
    <property type="match status" value="1"/>
</dbReference>
<dbReference type="PANTHER" id="PTHR10954">
    <property type="entry name" value="RIBONUCLEASE H2 SUBUNIT A"/>
    <property type="match status" value="1"/>
</dbReference>
<dbReference type="PANTHER" id="PTHR10954:SF18">
    <property type="entry name" value="RIBONUCLEASE HII"/>
    <property type="match status" value="1"/>
</dbReference>
<dbReference type="Pfam" id="PF01351">
    <property type="entry name" value="RNase_HII"/>
    <property type="match status" value="1"/>
</dbReference>
<dbReference type="SUPFAM" id="SSF53098">
    <property type="entry name" value="Ribonuclease H-like"/>
    <property type="match status" value="1"/>
</dbReference>
<dbReference type="PROSITE" id="PS51975">
    <property type="entry name" value="RNASE_H_2"/>
    <property type="match status" value="1"/>
</dbReference>
<keyword id="KW-0963">Cytoplasm</keyword>
<keyword id="KW-0255">Endonuclease</keyword>
<keyword id="KW-0378">Hydrolase</keyword>
<keyword id="KW-0464">Manganese</keyword>
<keyword id="KW-0479">Metal-binding</keyword>
<keyword id="KW-0540">Nuclease</keyword>
<keyword id="KW-1185">Reference proteome</keyword>
<protein>
    <recommendedName>
        <fullName evidence="1">Ribonuclease HII</fullName>
        <shortName evidence="1">RNase HII</shortName>
        <ecNumber evidence="1">3.1.26.4</ecNumber>
    </recommendedName>
</protein>
<comment type="function">
    <text evidence="1">Endonuclease that specifically degrades the RNA of RNA-DNA hybrids.</text>
</comment>
<comment type="catalytic activity">
    <reaction evidence="1">
        <text>Endonucleolytic cleavage to 5'-phosphomonoester.</text>
        <dbReference type="EC" id="3.1.26.4"/>
    </reaction>
</comment>
<comment type="cofactor">
    <cofactor evidence="1">
        <name>Mn(2+)</name>
        <dbReference type="ChEBI" id="CHEBI:29035"/>
    </cofactor>
    <cofactor evidence="1">
        <name>Mg(2+)</name>
        <dbReference type="ChEBI" id="CHEBI:18420"/>
    </cofactor>
    <text evidence="1">Manganese or magnesium. Binds 1 divalent metal ion per monomer in the absence of substrate. May bind a second metal ion after substrate binding.</text>
</comment>
<comment type="subcellular location">
    <subcellularLocation>
        <location evidence="1">Cytoplasm</location>
    </subcellularLocation>
</comment>
<comment type="similarity">
    <text evidence="1">Belongs to the RNase HII family.</text>
</comment>
<organism>
    <name type="scientific">Thermosynechococcus vestitus (strain NIES-2133 / IAM M-273 / BP-1)</name>
    <dbReference type="NCBI Taxonomy" id="197221"/>
    <lineage>
        <taxon>Bacteria</taxon>
        <taxon>Bacillati</taxon>
        <taxon>Cyanobacteriota</taxon>
        <taxon>Cyanophyceae</taxon>
        <taxon>Acaryochloridales</taxon>
        <taxon>Thermosynechococcaceae</taxon>
        <taxon>Thermosynechococcus</taxon>
    </lineage>
</organism>
<reference key="1">
    <citation type="journal article" date="2002" name="DNA Res.">
        <title>Complete genome structure of the thermophilic cyanobacterium Thermosynechococcus elongatus BP-1.</title>
        <authorList>
            <person name="Nakamura Y."/>
            <person name="Kaneko T."/>
            <person name="Sato S."/>
            <person name="Ikeuchi M."/>
            <person name="Katoh H."/>
            <person name="Sasamoto S."/>
            <person name="Watanabe A."/>
            <person name="Iriguchi M."/>
            <person name="Kawashima K."/>
            <person name="Kimura T."/>
            <person name="Kishida Y."/>
            <person name="Kiyokawa C."/>
            <person name="Kohara M."/>
            <person name="Matsumoto M."/>
            <person name="Matsuno A."/>
            <person name="Nakazaki N."/>
            <person name="Shimpo S."/>
            <person name="Sugimoto M."/>
            <person name="Takeuchi C."/>
            <person name="Yamada M."/>
            <person name="Tabata S."/>
        </authorList>
    </citation>
    <scope>NUCLEOTIDE SEQUENCE [LARGE SCALE GENOMIC DNA]</scope>
    <source>
        <strain>NIES-2133 / IAM M-273 / BP-1</strain>
    </source>
</reference>
<accession>Q8DL36</accession>
<sequence length="214" mass="23824">MEPLSLIYEQAYWQQGYSRVVGVDEVGRGCLAGPVVAAAVILPVDCVPLPEVRDSKQLTARQRSRLFAQIYHQAIAIGIGSASVAEIDQVNILQATYRAMARALGRVAPWDHALIDGKLTKTAPFERVTAIIGGDRHSYSIACASIIAKVRRDRFMARLARRYPQYGWERNVGYGTPEHRQALDQYGLTPWHRRSFLKSLLPSEAHLCNAIPAE</sequence>